<reference key="1">
    <citation type="journal article" date="2000" name="Nature">
        <title>The complete sequence of the mucosal pathogen Ureaplasma urealyticum.</title>
        <authorList>
            <person name="Glass J.I."/>
            <person name="Lefkowitz E.J."/>
            <person name="Glass J.S."/>
            <person name="Heiner C.R."/>
            <person name="Chen E.Y."/>
            <person name="Cassell G.H."/>
        </authorList>
    </citation>
    <scope>NUCLEOTIDE SEQUENCE [LARGE SCALE GENOMIC DNA]</scope>
    <source>
        <strain>ATCC 700970</strain>
    </source>
</reference>
<keyword id="KW-1185">Reference proteome</keyword>
<evidence type="ECO:0000256" key="1">
    <source>
        <dbReference type="SAM" id="MobiDB-lite"/>
    </source>
</evidence>
<protein>
    <recommendedName>
        <fullName>Uncharacterized protein UU165</fullName>
    </recommendedName>
</protein>
<sequence length="108" mass="12964">MVDELEKNQVQPQETEENKENALYDEIDKRIQKQFENYLKTNEQLDNANKLVEAKLKEIKDLENTFKQREQELLNKIATLEQNQQFVNIHQEKPVVEDANSHFLKFFN</sequence>
<organism>
    <name type="scientific">Ureaplasma parvum serovar 3 (strain ATCC 700970)</name>
    <dbReference type="NCBI Taxonomy" id="273119"/>
    <lineage>
        <taxon>Bacteria</taxon>
        <taxon>Bacillati</taxon>
        <taxon>Mycoplasmatota</taxon>
        <taxon>Mycoplasmoidales</taxon>
        <taxon>Mycoplasmoidaceae</taxon>
        <taxon>Ureaplasma</taxon>
    </lineage>
</organism>
<gene>
    <name type="ordered locus">UU165</name>
</gene>
<dbReference type="EMBL" id="AF222894">
    <property type="protein sequence ID" value="AAF30571.1"/>
    <property type="molecule type" value="Genomic_DNA"/>
</dbReference>
<dbReference type="RefSeq" id="WP_010891696.1">
    <property type="nucleotide sequence ID" value="NC_002162.1"/>
</dbReference>
<dbReference type="SMR" id="Q9PQX9"/>
<dbReference type="STRING" id="273119.UU165"/>
<dbReference type="EnsemblBacteria" id="AAF30571">
    <property type="protein sequence ID" value="AAF30571"/>
    <property type="gene ID" value="UU165"/>
</dbReference>
<dbReference type="GeneID" id="29672711"/>
<dbReference type="KEGG" id="uur:UU165"/>
<dbReference type="HOGENOM" id="CLU_2195795_0_0_14"/>
<dbReference type="OrthoDB" id="9873009at2"/>
<dbReference type="Proteomes" id="UP000000423">
    <property type="component" value="Chromosome"/>
</dbReference>
<proteinExistence type="predicted"/>
<feature type="chain" id="PRO_0000220822" description="Uncharacterized protein UU165">
    <location>
        <begin position="1"/>
        <end position="108"/>
    </location>
</feature>
<feature type="region of interest" description="Disordered" evidence="1">
    <location>
        <begin position="1"/>
        <end position="23"/>
    </location>
</feature>
<name>Y165_UREPA</name>
<accession>Q9PQX9</accession>